<protein>
    <recommendedName>
        <fullName evidence="1">Lipoprotein-releasing system ATP-binding protein LolD</fullName>
        <ecNumber evidence="1">7.6.2.-</ecNumber>
    </recommendedName>
</protein>
<sequence length="229" mass="25049">MSNSLLVCHGLRKIYREAQLETEVLKGVSFAIEPNELVAIVGSSGSGKSTLLHLLGALDEPSDGDVFFKGQKLNSMSANKQAKIRNQEIGFVYQFHHLLADFSAMENVAMPLLIGGMATDKAESKAKSILDMVGLSHRYEHRPSELSGGERQRVAFARALVNNPSIVLADEPTGNLDHKTALEIYDLMCKLNKESGTAFLVVTHDNELAAKLDRCMHMQDGNLVQVEVA</sequence>
<gene>
    <name evidence="1" type="primary">lolD</name>
    <name type="ordered locus">PBPRA2389</name>
</gene>
<proteinExistence type="inferred from homology"/>
<accession>Q6LPK2</accession>
<keyword id="KW-0067">ATP-binding</keyword>
<keyword id="KW-0997">Cell inner membrane</keyword>
<keyword id="KW-1003">Cell membrane</keyword>
<keyword id="KW-0472">Membrane</keyword>
<keyword id="KW-0547">Nucleotide-binding</keyword>
<keyword id="KW-1185">Reference proteome</keyword>
<keyword id="KW-1278">Translocase</keyword>
<keyword id="KW-0813">Transport</keyword>
<feature type="chain" id="PRO_0000272119" description="Lipoprotein-releasing system ATP-binding protein LolD">
    <location>
        <begin position="1"/>
        <end position="229"/>
    </location>
</feature>
<feature type="domain" description="ABC transporter" evidence="1">
    <location>
        <begin position="9"/>
        <end position="228"/>
    </location>
</feature>
<feature type="binding site" evidence="1">
    <location>
        <begin position="42"/>
        <end position="49"/>
    </location>
    <ligand>
        <name>ATP</name>
        <dbReference type="ChEBI" id="CHEBI:30616"/>
    </ligand>
</feature>
<dbReference type="EC" id="7.6.2.-" evidence="1"/>
<dbReference type="EMBL" id="CR378670">
    <property type="protein sequence ID" value="CAG20774.1"/>
    <property type="status" value="ALT_INIT"/>
    <property type="molecule type" value="Genomic_DNA"/>
</dbReference>
<dbReference type="RefSeq" id="WP_006233563.1">
    <property type="nucleotide sequence ID" value="NC_006370.1"/>
</dbReference>
<dbReference type="SMR" id="Q6LPK2"/>
<dbReference type="STRING" id="298386.PBPRA2389"/>
<dbReference type="KEGG" id="ppr:PBPRA2389"/>
<dbReference type="eggNOG" id="COG1136">
    <property type="taxonomic scope" value="Bacteria"/>
</dbReference>
<dbReference type="HOGENOM" id="CLU_000604_1_22_6"/>
<dbReference type="Proteomes" id="UP000000593">
    <property type="component" value="Chromosome 1"/>
</dbReference>
<dbReference type="GO" id="GO:0005886">
    <property type="term" value="C:plasma membrane"/>
    <property type="evidence" value="ECO:0007669"/>
    <property type="project" value="UniProtKB-SubCell"/>
</dbReference>
<dbReference type="GO" id="GO:0005524">
    <property type="term" value="F:ATP binding"/>
    <property type="evidence" value="ECO:0007669"/>
    <property type="project" value="UniProtKB-KW"/>
</dbReference>
<dbReference type="GO" id="GO:0016887">
    <property type="term" value="F:ATP hydrolysis activity"/>
    <property type="evidence" value="ECO:0007669"/>
    <property type="project" value="InterPro"/>
</dbReference>
<dbReference type="GO" id="GO:0022857">
    <property type="term" value="F:transmembrane transporter activity"/>
    <property type="evidence" value="ECO:0007669"/>
    <property type="project" value="TreeGrafter"/>
</dbReference>
<dbReference type="GO" id="GO:0044874">
    <property type="term" value="P:lipoprotein localization to outer membrane"/>
    <property type="evidence" value="ECO:0007669"/>
    <property type="project" value="TreeGrafter"/>
</dbReference>
<dbReference type="GO" id="GO:0089705">
    <property type="term" value="P:protein localization to outer membrane"/>
    <property type="evidence" value="ECO:0007669"/>
    <property type="project" value="TreeGrafter"/>
</dbReference>
<dbReference type="CDD" id="cd03255">
    <property type="entry name" value="ABC_MJ0796_LolCDE_FtsE"/>
    <property type="match status" value="1"/>
</dbReference>
<dbReference type="FunFam" id="3.40.50.300:FF:000230">
    <property type="entry name" value="Lipoprotein-releasing system ATP-binding protein LolD"/>
    <property type="match status" value="1"/>
</dbReference>
<dbReference type="Gene3D" id="3.40.50.300">
    <property type="entry name" value="P-loop containing nucleotide triphosphate hydrolases"/>
    <property type="match status" value="1"/>
</dbReference>
<dbReference type="InterPro" id="IPR003593">
    <property type="entry name" value="AAA+_ATPase"/>
</dbReference>
<dbReference type="InterPro" id="IPR003439">
    <property type="entry name" value="ABC_transporter-like_ATP-bd"/>
</dbReference>
<dbReference type="InterPro" id="IPR017871">
    <property type="entry name" value="ABC_transporter-like_CS"/>
</dbReference>
<dbReference type="InterPro" id="IPR015854">
    <property type="entry name" value="ABC_transpr_LolD-like"/>
</dbReference>
<dbReference type="InterPro" id="IPR011924">
    <property type="entry name" value="LolD_lipo_ATP-bd"/>
</dbReference>
<dbReference type="InterPro" id="IPR017911">
    <property type="entry name" value="MacB-like_ATP-bd"/>
</dbReference>
<dbReference type="InterPro" id="IPR027417">
    <property type="entry name" value="P-loop_NTPase"/>
</dbReference>
<dbReference type="NCBIfam" id="TIGR02211">
    <property type="entry name" value="LolD_lipo_ex"/>
    <property type="match status" value="1"/>
</dbReference>
<dbReference type="PANTHER" id="PTHR24220">
    <property type="entry name" value="IMPORT ATP-BINDING PROTEIN"/>
    <property type="match status" value="1"/>
</dbReference>
<dbReference type="PANTHER" id="PTHR24220:SF689">
    <property type="entry name" value="LIPOPROTEIN-RELEASING SYSTEM ATP-BINDING PROTEIN LOLD"/>
    <property type="match status" value="1"/>
</dbReference>
<dbReference type="Pfam" id="PF00005">
    <property type="entry name" value="ABC_tran"/>
    <property type="match status" value="1"/>
</dbReference>
<dbReference type="SMART" id="SM00382">
    <property type="entry name" value="AAA"/>
    <property type="match status" value="1"/>
</dbReference>
<dbReference type="SUPFAM" id="SSF52540">
    <property type="entry name" value="P-loop containing nucleoside triphosphate hydrolases"/>
    <property type="match status" value="1"/>
</dbReference>
<dbReference type="PROSITE" id="PS00211">
    <property type="entry name" value="ABC_TRANSPORTER_1"/>
    <property type="match status" value="1"/>
</dbReference>
<dbReference type="PROSITE" id="PS50893">
    <property type="entry name" value="ABC_TRANSPORTER_2"/>
    <property type="match status" value="1"/>
</dbReference>
<dbReference type="PROSITE" id="PS51244">
    <property type="entry name" value="LOLD"/>
    <property type="match status" value="1"/>
</dbReference>
<name>LOLD_PHOPR</name>
<reference key="1">
    <citation type="journal article" date="2005" name="Science">
        <title>Life at depth: Photobacterium profundum genome sequence and expression analysis.</title>
        <authorList>
            <person name="Vezzi A."/>
            <person name="Campanaro S."/>
            <person name="D'Angelo M."/>
            <person name="Simonato F."/>
            <person name="Vitulo N."/>
            <person name="Lauro F.M."/>
            <person name="Cestaro A."/>
            <person name="Malacrida G."/>
            <person name="Simionati B."/>
            <person name="Cannata N."/>
            <person name="Romualdi C."/>
            <person name="Bartlett D.H."/>
            <person name="Valle G."/>
        </authorList>
    </citation>
    <scope>NUCLEOTIDE SEQUENCE [LARGE SCALE GENOMIC DNA]</scope>
    <source>
        <strain>ATCC BAA-1253 / SS9</strain>
    </source>
</reference>
<evidence type="ECO:0000255" key="1">
    <source>
        <dbReference type="HAMAP-Rule" id="MF_01708"/>
    </source>
</evidence>
<evidence type="ECO:0000305" key="2"/>
<comment type="function">
    <text evidence="1">Part of the ABC transporter complex LolCDE involved in the translocation of mature outer membrane-directed lipoproteins, from the inner membrane to the periplasmic chaperone, LolA. Responsible for the formation of the LolA-lipoprotein complex in an ATP-dependent manner.</text>
</comment>
<comment type="subunit">
    <text evidence="1">The complex is composed of two ATP-binding proteins (LolD) and two transmembrane proteins (LolC and LolE).</text>
</comment>
<comment type="subcellular location">
    <subcellularLocation>
        <location evidence="1">Cell inner membrane</location>
        <topology evidence="1">Peripheral membrane protein</topology>
    </subcellularLocation>
</comment>
<comment type="similarity">
    <text evidence="1">Belongs to the ABC transporter superfamily. Lipoprotein translocase (TC 3.A.1.125) family.</text>
</comment>
<comment type="sequence caution" evidence="2">
    <conflict type="erroneous initiation">
        <sequence resource="EMBL-CDS" id="CAG20774"/>
    </conflict>
</comment>
<organism>
    <name type="scientific">Photobacterium profundum (strain SS9)</name>
    <dbReference type="NCBI Taxonomy" id="298386"/>
    <lineage>
        <taxon>Bacteria</taxon>
        <taxon>Pseudomonadati</taxon>
        <taxon>Pseudomonadota</taxon>
        <taxon>Gammaproteobacteria</taxon>
        <taxon>Vibrionales</taxon>
        <taxon>Vibrionaceae</taxon>
        <taxon>Photobacterium</taxon>
    </lineage>
</organism>